<accession>Q5I1X5</accession>
<reference evidence="9 10" key="1">
    <citation type="journal article" date="2005" name="Hum. Mol. Genet.">
        <title>A mutation in NFkB interacting protein 1 results in cardiomyopathy and abnormal skin development in wa3 mice.</title>
        <authorList>
            <person name="Herron B.J."/>
            <person name="Rao C."/>
            <person name="Liu S."/>
            <person name="Laprade L."/>
            <person name="Richardson J.A."/>
            <person name="Olivieri E."/>
            <person name="Semsarian C."/>
            <person name="Millar S.E."/>
            <person name="Stubbs L."/>
            <person name="Beier D.R."/>
        </authorList>
    </citation>
    <scope>NUCLEOTIDE SEQUENCE [MRNA]</scope>
    <scope>TISSUE SPECIFICITY</scope>
    <scope>DISEASE</scope>
    <scope>INTERACTION WITH RELA</scope>
    <source>
        <strain evidence="10">DBA/2J</strain>
    </source>
</reference>
<reference key="2">
    <citation type="journal article" date="2009" name="Immunity">
        <title>The phagosomal proteome in interferon-gamma-activated macrophages.</title>
        <authorList>
            <person name="Trost M."/>
            <person name="English L."/>
            <person name="Lemieux S."/>
            <person name="Courcelles M."/>
            <person name="Desjardins M."/>
            <person name="Thibault P."/>
        </authorList>
    </citation>
    <scope>IDENTIFICATION BY MASS SPECTROMETRY [LARGE SCALE ANALYSIS]</scope>
</reference>
<reference key="3">
    <citation type="journal article" date="2010" name="Cell">
        <title>A tissue-specific atlas of mouse protein phosphorylation and expression.</title>
        <authorList>
            <person name="Huttlin E.L."/>
            <person name="Jedrychowski M.P."/>
            <person name="Elias J.E."/>
            <person name="Goswami T."/>
            <person name="Rad R."/>
            <person name="Beausoleil S.A."/>
            <person name="Villen J."/>
            <person name="Haas W."/>
            <person name="Sowa M.E."/>
            <person name="Gygi S.P."/>
        </authorList>
    </citation>
    <scope>PHOSPHORYLATION [LARGE SCALE ANALYSIS] AT SER-113; THR-123; SER-183 AND THR-275</scope>
    <scope>IDENTIFICATION BY MASS SPECTROMETRY [LARGE SCALE ANALYSIS]</scope>
    <source>
        <tissue>Heart</tissue>
        <tissue>Testis</tissue>
    </source>
</reference>
<reference key="4">
    <citation type="journal article" date="2014" name="Mol. Cell. Proteomics">
        <title>Immunoaffinity enrichment and mass spectrometry analysis of protein methylation.</title>
        <authorList>
            <person name="Guo A."/>
            <person name="Gu H."/>
            <person name="Zhou J."/>
            <person name="Mulhern D."/>
            <person name="Wang Y."/>
            <person name="Lee K.A."/>
            <person name="Yang V."/>
            <person name="Aguiar M."/>
            <person name="Kornhauser J."/>
            <person name="Jia X."/>
            <person name="Ren J."/>
            <person name="Beausoleil S.A."/>
            <person name="Silva J.C."/>
            <person name="Vemulapalli V."/>
            <person name="Bedford M.T."/>
            <person name="Comb M.J."/>
        </authorList>
    </citation>
    <scope>METHYLATION [LARGE SCALE ANALYSIS] AT ARG-137; ARG-142; ARG-144; ARG-160; ARG-167 AND ARG-205</scope>
    <scope>IDENTIFICATION BY MASS SPECTROMETRY [LARGE SCALE ANALYSIS]</scope>
    <source>
        <tissue>Brain</tissue>
        <tissue>Embryo</tissue>
    </source>
</reference>
<reference key="5">
    <citation type="journal article" date="2017" name="EMBO Mol. Med.">
        <title>Sequence variation in PPP1R13L results in a novel form of cardio-cutaneous syndrome.</title>
        <authorList>
            <person name="Falik-Zaccai T.C."/>
            <person name="Barsheshet Y."/>
            <person name="Mandel H."/>
            <person name="Segev M."/>
            <person name="Lorber A."/>
            <person name="Gelberg S."/>
            <person name="Kalfon L."/>
            <person name="Ben Haroush S."/>
            <person name="Shalata A."/>
            <person name="Gelernter-Yaniv L."/>
            <person name="Chaim S."/>
            <person name="Raviv Shay D."/>
            <person name="Khayat M."/>
            <person name="Werbner M."/>
            <person name="Levi I."/>
            <person name="Shoval Y."/>
            <person name="Tal G."/>
            <person name="Shalev S."/>
            <person name="Reuveni E."/>
            <person name="Avitan-Hersh E."/>
            <person name="Vlodavsky E."/>
            <person name="Appl-Sarid L."/>
            <person name="Goldsher D."/>
            <person name="Bergman R."/>
            <person name="Segal Z."/>
            <person name="Bitterman-Deutsch O."/>
            <person name="Avni O."/>
        </authorList>
    </citation>
    <scope>FUNCTION</scope>
    <scope>INVOLVEMENT IN WA3 PHENOTYPE</scope>
</reference>
<dbReference type="EMBL" id="AY869711">
    <property type="protein sequence ID" value="AAW51145.1"/>
    <property type="molecule type" value="mRNA"/>
</dbReference>
<dbReference type="CCDS" id="CCDS20899.1"/>
<dbReference type="RefSeq" id="NP_001010836.1">
    <property type="nucleotide sequence ID" value="NM_001010836.4"/>
</dbReference>
<dbReference type="RefSeq" id="NP_001406264.1">
    <property type="nucleotide sequence ID" value="NM_001419335.1"/>
</dbReference>
<dbReference type="RefSeq" id="XP_006540189.1">
    <property type="nucleotide sequence ID" value="XM_006540126.3"/>
</dbReference>
<dbReference type="RefSeq" id="XP_006540190.1">
    <property type="nucleotide sequence ID" value="XM_006540127.5"/>
</dbReference>
<dbReference type="RefSeq" id="XP_006540191.1">
    <property type="nucleotide sequence ID" value="XM_006540128.4"/>
</dbReference>
<dbReference type="RefSeq" id="XP_006540192.1">
    <property type="nucleotide sequence ID" value="XM_006540129.1"/>
</dbReference>
<dbReference type="RefSeq" id="XP_030098560.1">
    <property type="nucleotide sequence ID" value="XM_030242700.2"/>
</dbReference>
<dbReference type="RefSeq" id="XP_030098561.1">
    <property type="nucleotide sequence ID" value="XM_030242701.2"/>
</dbReference>
<dbReference type="RefSeq" id="XP_036009077.1">
    <property type="nucleotide sequence ID" value="XM_036153184.1"/>
</dbReference>
<dbReference type="SMR" id="Q5I1X5"/>
<dbReference type="BioGRID" id="237177">
    <property type="interactions" value="3"/>
</dbReference>
<dbReference type="FunCoup" id="Q5I1X5">
    <property type="interactions" value="88"/>
</dbReference>
<dbReference type="IntAct" id="Q5I1X5">
    <property type="interactions" value="43"/>
</dbReference>
<dbReference type="STRING" id="10090.ENSMUSP00000047839"/>
<dbReference type="GlyGen" id="Q5I1X5">
    <property type="glycosylation" value="1 site, 1 O-linked glycan (1 site)"/>
</dbReference>
<dbReference type="iPTMnet" id="Q5I1X5"/>
<dbReference type="PhosphoSitePlus" id="Q5I1X5"/>
<dbReference type="PaxDb" id="10090-ENSMUSP00000047839"/>
<dbReference type="ProteomicsDB" id="267079"/>
<dbReference type="Pumba" id="Q5I1X5"/>
<dbReference type="Antibodypedia" id="31307">
    <property type="antibodies" value="249 antibodies from 31 providers"/>
</dbReference>
<dbReference type="DNASU" id="333654"/>
<dbReference type="Ensembl" id="ENSMUST00000047621.14">
    <property type="protein sequence ID" value="ENSMUSP00000047839.8"/>
    <property type="gene ID" value="ENSMUSG00000040734.15"/>
</dbReference>
<dbReference type="GeneID" id="333654"/>
<dbReference type="KEGG" id="mmu:333654"/>
<dbReference type="UCSC" id="uc009flo.1">
    <property type="organism name" value="mouse"/>
</dbReference>
<dbReference type="AGR" id="MGI:3525053"/>
<dbReference type="CTD" id="10848"/>
<dbReference type="MGI" id="MGI:3525053">
    <property type="gene designation" value="Ppp1r13l"/>
</dbReference>
<dbReference type="VEuPathDB" id="HostDB:ENSMUSG00000040734"/>
<dbReference type="eggNOG" id="KOG0515">
    <property type="taxonomic scope" value="Eukaryota"/>
</dbReference>
<dbReference type="GeneTree" id="ENSGT00940000160551"/>
<dbReference type="HOGENOM" id="CLU_019814_0_0_1"/>
<dbReference type="InParanoid" id="Q5I1X5"/>
<dbReference type="OMA" id="QPNQYKH"/>
<dbReference type="OrthoDB" id="10038642at2759"/>
<dbReference type="PhylomeDB" id="Q5I1X5"/>
<dbReference type="TreeFam" id="TF105545"/>
<dbReference type="Reactome" id="R-MMU-6804759">
    <property type="pathway name" value="Regulation of TP53 Activity through Association with Co-factors"/>
</dbReference>
<dbReference type="BioGRID-ORCS" id="333654">
    <property type="hits" value="1 hit in 78 CRISPR screens"/>
</dbReference>
<dbReference type="PRO" id="PR:Q5I1X5"/>
<dbReference type="Proteomes" id="UP000000589">
    <property type="component" value="Chromosome 7"/>
</dbReference>
<dbReference type="RNAct" id="Q5I1X5">
    <property type="molecule type" value="protein"/>
</dbReference>
<dbReference type="Bgee" id="ENSMUSG00000040734">
    <property type="expression patterns" value="Expressed in interventricular septum and 184 other cell types or tissues"/>
</dbReference>
<dbReference type="ExpressionAtlas" id="Q5I1X5">
    <property type="expression patterns" value="baseline and differential"/>
</dbReference>
<dbReference type="GO" id="GO:0030054">
    <property type="term" value="C:cell junction"/>
    <property type="evidence" value="ECO:0007669"/>
    <property type="project" value="Ensembl"/>
</dbReference>
<dbReference type="GO" id="GO:0005829">
    <property type="term" value="C:cytosol"/>
    <property type="evidence" value="ECO:0007669"/>
    <property type="project" value="Ensembl"/>
</dbReference>
<dbReference type="GO" id="GO:0045171">
    <property type="term" value="C:intercellular bridge"/>
    <property type="evidence" value="ECO:0007669"/>
    <property type="project" value="Ensembl"/>
</dbReference>
<dbReference type="GO" id="GO:0005634">
    <property type="term" value="C:nucleus"/>
    <property type="evidence" value="ECO:0007669"/>
    <property type="project" value="UniProtKB-SubCell"/>
</dbReference>
<dbReference type="GO" id="GO:0042802">
    <property type="term" value="F:identical protein binding"/>
    <property type="evidence" value="ECO:0007669"/>
    <property type="project" value="Ensembl"/>
</dbReference>
<dbReference type="GO" id="GO:0006915">
    <property type="term" value="P:apoptotic process"/>
    <property type="evidence" value="ECO:0007669"/>
    <property type="project" value="UniProtKB-KW"/>
</dbReference>
<dbReference type="GO" id="GO:0060048">
    <property type="term" value="P:cardiac muscle contraction"/>
    <property type="evidence" value="ECO:0000315"/>
    <property type="project" value="MGI"/>
</dbReference>
<dbReference type="GO" id="GO:0003215">
    <property type="term" value="P:cardiac right ventricle morphogenesis"/>
    <property type="evidence" value="ECO:0000315"/>
    <property type="project" value="MGI"/>
</dbReference>
<dbReference type="GO" id="GO:0031076">
    <property type="term" value="P:embryonic camera-type eye development"/>
    <property type="evidence" value="ECO:0000315"/>
    <property type="project" value="MGI"/>
</dbReference>
<dbReference type="GO" id="GO:0042633">
    <property type="term" value="P:hair cycle"/>
    <property type="evidence" value="ECO:0000315"/>
    <property type="project" value="MGI"/>
</dbReference>
<dbReference type="GO" id="GO:0035264">
    <property type="term" value="P:multicellular organism growth"/>
    <property type="evidence" value="ECO:0000315"/>
    <property type="project" value="MGI"/>
</dbReference>
<dbReference type="GO" id="GO:0048871">
    <property type="term" value="P:multicellular organismal-level homeostasis"/>
    <property type="evidence" value="ECO:0000315"/>
    <property type="project" value="MGI"/>
</dbReference>
<dbReference type="GO" id="GO:0050728">
    <property type="term" value="P:negative regulation of inflammatory response"/>
    <property type="evidence" value="ECO:0000315"/>
    <property type="project" value="UniProtKB"/>
</dbReference>
<dbReference type="GO" id="GO:0000122">
    <property type="term" value="P:negative regulation of transcription by RNA polymerase II"/>
    <property type="evidence" value="ECO:0000315"/>
    <property type="project" value="MGI"/>
</dbReference>
<dbReference type="GO" id="GO:0045597">
    <property type="term" value="P:positive regulation of cell differentiation"/>
    <property type="evidence" value="ECO:0007669"/>
    <property type="project" value="Ensembl"/>
</dbReference>
<dbReference type="GO" id="GO:0009791">
    <property type="term" value="P:post-embryonic development"/>
    <property type="evidence" value="ECO:0000315"/>
    <property type="project" value="MGI"/>
</dbReference>
<dbReference type="GO" id="GO:0003229">
    <property type="term" value="P:ventricular cardiac muscle tissue development"/>
    <property type="evidence" value="ECO:0000315"/>
    <property type="project" value="MGI"/>
</dbReference>
<dbReference type="CDD" id="cd11952">
    <property type="entry name" value="SH3_iASPP"/>
    <property type="match status" value="1"/>
</dbReference>
<dbReference type="FunFam" id="1.25.40.20:FF:000008">
    <property type="entry name" value="Apoptosis-stimulating of p53 protein 2 isoform 1"/>
    <property type="match status" value="1"/>
</dbReference>
<dbReference type="Gene3D" id="1.25.40.20">
    <property type="entry name" value="Ankyrin repeat-containing domain"/>
    <property type="match status" value="1"/>
</dbReference>
<dbReference type="InterPro" id="IPR002110">
    <property type="entry name" value="Ankyrin_rpt"/>
</dbReference>
<dbReference type="InterPro" id="IPR036770">
    <property type="entry name" value="Ankyrin_rpt-contain_sf"/>
</dbReference>
<dbReference type="InterPro" id="IPR028320">
    <property type="entry name" value="iASPP"/>
</dbReference>
<dbReference type="InterPro" id="IPR036028">
    <property type="entry name" value="SH3-like_dom_sf"/>
</dbReference>
<dbReference type="InterPro" id="IPR001452">
    <property type="entry name" value="SH3_domain"/>
</dbReference>
<dbReference type="InterPro" id="IPR042722">
    <property type="entry name" value="SH3_iASPP"/>
</dbReference>
<dbReference type="PANTHER" id="PTHR24164">
    <property type="entry name" value="RELA-ASSOCIATED INHIBITOR"/>
    <property type="match status" value="1"/>
</dbReference>
<dbReference type="PANTHER" id="PTHR24164:SF4">
    <property type="entry name" value="RELA-ASSOCIATED INHIBITOR"/>
    <property type="match status" value="1"/>
</dbReference>
<dbReference type="Pfam" id="PF12796">
    <property type="entry name" value="Ank_2"/>
    <property type="match status" value="1"/>
</dbReference>
<dbReference type="Pfam" id="PF14604">
    <property type="entry name" value="SH3_9"/>
    <property type="match status" value="1"/>
</dbReference>
<dbReference type="PRINTS" id="PR00452">
    <property type="entry name" value="SH3DOMAIN"/>
</dbReference>
<dbReference type="SMART" id="SM00248">
    <property type="entry name" value="ANK"/>
    <property type="match status" value="2"/>
</dbReference>
<dbReference type="SMART" id="SM00326">
    <property type="entry name" value="SH3"/>
    <property type="match status" value="1"/>
</dbReference>
<dbReference type="SUPFAM" id="SSF48403">
    <property type="entry name" value="Ankyrin repeat"/>
    <property type="match status" value="1"/>
</dbReference>
<dbReference type="SUPFAM" id="SSF50044">
    <property type="entry name" value="SH3-domain"/>
    <property type="match status" value="1"/>
</dbReference>
<dbReference type="PROSITE" id="PS50297">
    <property type="entry name" value="ANK_REP_REGION"/>
    <property type="match status" value="1"/>
</dbReference>
<dbReference type="PROSITE" id="PS50088">
    <property type="entry name" value="ANK_REPEAT"/>
    <property type="match status" value="2"/>
</dbReference>
<dbReference type="PROSITE" id="PS50002">
    <property type="entry name" value="SH3"/>
    <property type="match status" value="1"/>
</dbReference>
<protein>
    <recommendedName>
        <fullName>RelA-associated inhibitor</fullName>
    </recommendedName>
    <alternativeName>
        <fullName>Inhibitor of ASPP protein</fullName>
        <shortName>Protein iASPP</shortName>
    </alternativeName>
    <alternativeName>
        <fullName>NFkB-interacting protein 1</fullName>
    </alternativeName>
    <alternativeName>
        <fullName>PPP1R13B-like protein</fullName>
    </alternativeName>
</protein>
<sequence>MDSEAFQHARDLLDLNFQSLAMKHMDLKQMELDTAAAKVDELTKQLESLWSDSPAPPGAQAGVPSRMARYSTSPVPEHFGSRGSPQKIATDGIEARFGRSESAPSLHPYSPLSPKGRPSSPRTPIYLQPDTYSSLDRAPSPRPRAFDGAGSPHGRAPSPRPGIGPVRQPGPSTPFDYLGRAGSPRGSPLAEGPQAFFPERGPSPRPPAAAYDTAGTFGSPLLGAGGSAFTPPLRAQDDSTLRRRPPKAWNESDLDVAYEKKSSQTASYERLDVFTRPASPGLQLLPWRESSLDGLGASGKDHLTSATLPRNYKVSPLASDRRSDVGSYRRSLGSAGPSGTLPRSWQPVSRIPMPPSSPQPRSTPRQRPIPLSMIFKLQNAFWEHGAGRAVLPGSPIFSRAPPPKLPPQPPPQPQMQPQPQPQPQMQPQSQAQPQTPAPQQTWSPMNEGLLKSPAELEPEPELEVLLAPVEEAGDADEGTVTRPLSPTRLQPALPPEAQTVPELEEVARVLAEIPRPLKRRGSMEQSPAVALPPTHKKQYQQIINRLFHRHGGPGPGGPEPELSTITEGSEARAGPPAPAPPAPIPPPAPPQSSPPEQPQSMEMRSVLRKVGSPRKARRARLNPLVLLLDAALTGELDVVQQAVKEMNDPSQPNEEGITALHNAICGANYPIVDFLIAAGANVNSPDSHGWTPLHCAASCNDTAICTALVQHGAAIFATTLSDGATAIEKCDPYREGYADCATYLADVEQSMGLMHNGVVYALWDYSAEFGDELSFREGESVTVLRRDGPEETDWWWASLHGQEGYVPRNYFGLFPRVKSQRSKI</sequence>
<keyword id="KW-0007">Acetylation</keyword>
<keyword id="KW-0040">ANK repeat</keyword>
<keyword id="KW-0053">Apoptosis</keyword>
<keyword id="KW-0963">Cytoplasm</keyword>
<keyword id="KW-0488">Methylation</keyword>
<keyword id="KW-0539">Nucleus</keyword>
<keyword id="KW-0597">Phosphoprotein</keyword>
<keyword id="KW-1185">Reference proteome</keyword>
<keyword id="KW-0677">Repeat</keyword>
<keyword id="KW-0678">Repressor</keyword>
<keyword id="KW-0728">SH3 domain</keyword>
<keyword id="KW-0804">Transcription</keyword>
<keyword id="KW-0805">Transcription regulation</keyword>
<evidence type="ECO:0000250" key="1"/>
<evidence type="ECO:0000250" key="2">
    <source>
        <dbReference type="UniProtKB" id="Q8WUF5"/>
    </source>
</evidence>
<evidence type="ECO:0000255" key="3"/>
<evidence type="ECO:0000255" key="4">
    <source>
        <dbReference type="PROSITE-ProRule" id="PRU00192"/>
    </source>
</evidence>
<evidence type="ECO:0000256" key="5">
    <source>
        <dbReference type="SAM" id="MobiDB-lite"/>
    </source>
</evidence>
<evidence type="ECO:0000269" key="6">
    <source>
    </source>
</evidence>
<evidence type="ECO:0000269" key="7">
    <source>
    </source>
</evidence>
<evidence type="ECO:0000303" key="8">
    <source>
    </source>
</evidence>
<evidence type="ECO:0000305" key="9"/>
<evidence type="ECO:0000312" key="10">
    <source>
        <dbReference type="EMBL" id="AAW51145.1"/>
    </source>
</evidence>
<evidence type="ECO:0000312" key="11">
    <source>
        <dbReference type="MGI" id="MGI:3525053"/>
    </source>
</evidence>
<evidence type="ECO:0007744" key="12">
    <source>
    </source>
</evidence>
<evidence type="ECO:0007744" key="13">
    <source>
    </source>
</evidence>
<feature type="chain" id="PRO_0000066967" description="RelA-associated inhibitor">
    <location>
        <begin position="1"/>
        <end position="824"/>
    </location>
</feature>
<feature type="repeat" description="ANK 1" evidence="3">
    <location>
        <begin position="655"/>
        <end position="684"/>
    </location>
</feature>
<feature type="repeat" description="ANK 2" evidence="3">
    <location>
        <begin position="688"/>
        <end position="717"/>
    </location>
</feature>
<feature type="domain" description="SH3" evidence="4">
    <location>
        <begin position="754"/>
        <end position="816"/>
    </location>
</feature>
<feature type="region of interest" description="Disordered" evidence="5">
    <location>
        <begin position="48"/>
        <end position="87"/>
    </location>
</feature>
<feature type="region of interest" description="Disordered" evidence="5">
    <location>
        <begin position="99"/>
        <end position="271"/>
    </location>
</feature>
<feature type="region of interest" description="Disordered" evidence="5">
    <location>
        <begin position="291"/>
        <end position="370"/>
    </location>
</feature>
<feature type="region of interest" description="Disordered" evidence="5">
    <location>
        <begin position="388"/>
        <end position="501"/>
    </location>
</feature>
<feature type="region of interest" description="Disordered" evidence="5">
    <location>
        <begin position="547"/>
        <end position="614"/>
    </location>
</feature>
<feature type="compositionally biased region" description="Low complexity" evidence="5">
    <location>
        <begin position="359"/>
        <end position="370"/>
    </location>
</feature>
<feature type="compositionally biased region" description="Pro residues" evidence="5">
    <location>
        <begin position="400"/>
        <end position="424"/>
    </location>
</feature>
<feature type="compositionally biased region" description="Low complexity" evidence="5">
    <location>
        <begin position="425"/>
        <end position="440"/>
    </location>
</feature>
<feature type="compositionally biased region" description="Pro residues" evidence="5">
    <location>
        <begin position="575"/>
        <end position="597"/>
    </location>
</feature>
<feature type="modified residue" description="N-acetylmethionine" evidence="2">
    <location>
        <position position="1"/>
    </location>
</feature>
<feature type="modified residue" description="Phosphoserine" evidence="2">
    <location>
        <position position="84"/>
    </location>
</feature>
<feature type="modified residue" description="Phosphoserine" evidence="2">
    <location>
        <position position="100"/>
    </location>
</feature>
<feature type="modified residue" description="Phosphoserine" evidence="2">
    <location>
        <position position="102"/>
    </location>
</feature>
<feature type="modified residue" description="Phosphoserine" evidence="2">
    <location>
        <position position="110"/>
    </location>
</feature>
<feature type="modified residue" description="Phosphoserine" evidence="12">
    <location>
        <position position="113"/>
    </location>
</feature>
<feature type="modified residue" description="Phosphoserine" evidence="2">
    <location>
        <position position="119"/>
    </location>
</feature>
<feature type="modified residue" description="Phosphoserine" evidence="2">
    <location>
        <position position="120"/>
    </location>
</feature>
<feature type="modified residue" description="Phosphothreonine" evidence="12">
    <location>
        <position position="123"/>
    </location>
</feature>
<feature type="modified residue" description="Phosphoserine" evidence="2">
    <location>
        <position position="134"/>
    </location>
</feature>
<feature type="modified residue" description="Omega-N-methylarginine" evidence="13">
    <location>
        <position position="137"/>
    </location>
</feature>
<feature type="modified residue" description="Omega-N-methylarginine" evidence="13">
    <location>
        <position position="142"/>
    </location>
</feature>
<feature type="modified residue" description="Omega-N-methylarginine" evidence="13">
    <location>
        <position position="144"/>
    </location>
</feature>
<feature type="modified residue" description="Omega-N-methylarginine" evidence="13">
    <location>
        <position position="160"/>
    </location>
</feature>
<feature type="modified residue" description="Omega-N-methylarginine" evidence="13">
    <location>
        <position position="167"/>
    </location>
</feature>
<feature type="modified residue" description="Omega-N-methylarginine" evidence="2">
    <location>
        <position position="180"/>
    </location>
</feature>
<feature type="modified residue" description="Phosphoserine" evidence="12">
    <location>
        <position position="183"/>
    </location>
</feature>
<feature type="modified residue" description="Phosphoserine" evidence="2">
    <location>
        <position position="187"/>
    </location>
</feature>
<feature type="modified residue" description="Phosphoserine" evidence="2">
    <location>
        <position position="203"/>
    </location>
</feature>
<feature type="modified residue" description="Omega-N-methylarginine" evidence="13">
    <location>
        <position position="205"/>
    </location>
</feature>
<feature type="modified residue" description="Phosphothreonine" evidence="12">
    <location>
        <position position="275"/>
    </location>
</feature>
<feature type="modified residue" description="Phosphoserine" evidence="2">
    <location>
        <position position="279"/>
    </location>
</feature>
<feature type="modified residue" description="Phosphothreonine" evidence="2">
    <location>
        <position position="307"/>
    </location>
</feature>
<feature type="modified residue" description="Phosphoserine" evidence="2">
    <location>
        <position position="315"/>
    </location>
</feature>
<feature type="modified residue" description="Phosphoserine" evidence="2">
    <location>
        <position position="331"/>
    </location>
</feature>
<feature type="modified residue" description="Phosphoserine" evidence="2">
    <location>
        <position position="338"/>
    </location>
</feature>
<feature type="modified residue" description="Phosphothreonine" evidence="2">
    <location>
        <position position="340"/>
    </location>
</feature>
<feature type="modified residue" description="Phosphoserine" evidence="2">
    <location>
        <position position="522"/>
    </location>
</feature>
<feature type="modified residue" description="Phosphoserine" evidence="2">
    <location>
        <position position="563"/>
    </location>
</feature>
<feature type="modified residue" description="Phosphoserine" evidence="2">
    <location>
        <position position="593"/>
    </location>
</feature>
<proteinExistence type="evidence at protein level"/>
<comment type="function">
    <text evidence="2 7">Regulator that plays a central role in regulation of apoptosis and transcription via its interaction with NF-kappa-B and p53/TP53 proteins. Inhibits p53/TP53 function, possibly by preventing the association between p53/TP53 and ASPP1 or ASPP2, and therefore suppressing the subsequent activation of apoptosis (By similarity). Is involved in NF-kappa-B dependent negative regulation of inflammatory response (PubMed:28069640).</text>
</comment>
<comment type="subunit">
    <text evidence="1 2 6">Interacts with TP63 and TP73 (By similarity). Interacts with RELA NF-kappa-B subunit and with SP1 via its C-terminal part. Interacts (via SH3 domain and ANK repeats) with p53/TP53; the interaction inhibits pro-apoptotic activity of p53/TP53 (By similarity).</text>
</comment>
<comment type="interaction">
    <interactant intactId="EBI-6691266">
        <id>Q5I1X5</id>
    </interactant>
    <interactant intactId="EBI-911063">
        <id>P16546</id>
        <label>Sptan1</label>
    </interactant>
    <organismsDiffer>false</organismsDiffer>
    <experiments>2</experiments>
</comment>
<comment type="subcellular location">
    <subcellularLocation>
        <location evidence="2">Cytoplasm</location>
    </subcellularLocation>
    <subcellularLocation>
        <location evidence="2">Nucleus</location>
    </subcellularLocation>
    <text evidence="2">Predominantly cytoplasmic but also nuclear.</text>
</comment>
<comment type="tissue specificity">
    <text evidence="6">Most abundant in skin with high levels also found in heart, testis and stomach. In 15.5 dpc embryonic heart, expressed at higher levels in atria than ventricles.</text>
</comment>
<comment type="domain">
    <text evidence="2">The N-terminal region is required for cytoplasmic localization.</text>
</comment>
<comment type="domain">
    <text evidence="2">The ANK repeats and the SH3 domain are required for specific interactions with p53/TP53.</text>
</comment>
<comment type="disease">
    <text evidence="6 7">A recessive 14-bp deletion, which gives rise to a truncated protein, is the cause of the waved 3 phenotype (wa3). Wa3 mice have open eyes at birth, a wavy coat, and abnormalities of the heart and skin. They develop focal cardiac necrosis at an early age which progresses to fatal dilated cardiomyopathy (PubMed:15661756). Higher expression of pro-inflammatory cytokines is observed in the heart of wa3 mice compared to controls (PubMed:28069640).</text>
</comment>
<comment type="similarity">
    <text evidence="3">Belongs to the iASPP family.</text>
</comment>
<gene>
    <name evidence="11" type="primary">Ppp1r13l</name>
    <name evidence="8" type="synonym">Nkip1</name>
</gene>
<organism>
    <name type="scientific">Mus musculus</name>
    <name type="common">Mouse</name>
    <dbReference type="NCBI Taxonomy" id="10090"/>
    <lineage>
        <taxon>Eukaryota</taxon>
        <taxon>Metazoa</taxon>
        <taxon>Chordata</taxon>
        <taxon>Craniata</taxon>
        <taxon>Vertebrata</taxon>
        <taxon>Euteleostomi</taxon>
        <taxon>Mammalia</taxon>
        <taxon>Eutheria</taxon>
        <taxon>Euarchontoglires</taxon>
        <taxon>Glires</taxon>
        <taxon>Rodentia</taxon>
        <taxon>Myomorpha</taxon>
        <taxon>Muroidea</taxon>
        <taxon>Muridae</taxon>
        <taxon>Murinae</taxon>
        <taxon>Mus</taxon>
        <taxon>Mus</taxon>
    </lineage>
</organism>
<name>IASPP_MOUSE</name>